<proteinExistence type="evidence at protein level"/>
<reference key="1">
    <citation type="journal article" date="2006" name="Genome Biol.">
        <title>Genomic analysis reveals that Pseudomonas aeruginosa virulence is combinatorial.</title>
        <authorList>
            <person name="Lee D.G."/>
            <person name="Urbach J.M."/>
            <person name="Wu G."/>
            <person name="Liberati N.T."/>
            <person name="Feinbaum R.L."/>
            <person name="Miyata S."/>
            <person name="Diggins L.T."/>
            <person name="He J."/>
            <person name="Saucier M."/>
            <person name="Deziel E."/>
            <person name="Friedman L."/>
            <person name="Li L."/>
            <person name="Grills G."/>
            <person name="Montgomery K."/>
            <person name="Kucherlapati R."/>
            <person name="Rahme L.G."/>
            <person name="Ausubel F.M."/>
        </authorList>
    </citation>
    <scope>NUCLEOTIDE SEQUENCE [LARGE SCALE GENOMIC DNA]</scope>
    <source>
        <strain>UCBPP-PA14</strain>
    </source>
</reference>
<reference key="2">
    <citation type="journal article" date="2014" name="Anal. Bioanal. Chem.">
        <title>Potential of liquid-isoelectric-focusing protein fractionation to improve phosphoprotein characterization of Pseudomonas aeruginosa PA14.</title>
        <authorList>
            <person name="Ouidir T."/>
            <person name="Jarnier F."/>
            <person name="Cosette P."/>
            <person name="Jouenne T."/>
            <person name="Hardouin J."/>
        </authorList>
    </citation>
    <scope>IDENTIFICATION BY MASS SPECTROMETRY</scope>
    <source>
        <strain>UCBPP-PA14</strain>
    </source>
</reference>
<organism>
    <name type="scientific">Pseudomonas aeruginosa (strain UCBPP-PA14)</name>
    <dbReference type="NCBI Taxonomy" id="208963"/>
    <lineage>
        <taxon>Bacteria</taxon>
        <taxon>Pseudomonadati</taxon>
        <taxon>Pseudomonadota</taxon>
        <taxon>Gammaproteobacteria</taxon>
        <taxon>Pseudomonadales</taxon>
        <taxon>Pseudomonadaceae</taxon>
        <taxon>Pseudomonas</taxon>
    </lineage>
</organism>
<accession>Q02EW8</accession>
<dbReference type="EMBL" id="CP000438">
    <property type="protein sequence ID" value="ABJ14433.1"/>
    <property type="molecule type" value="Genomic_DNA"/>
</dbReference>
<dbReference type="RefSeq" id="WP_003095846.1">
    <property type="nucleotide sequence ID" value="NZ_CP034244.1"/>
</dbReference>
<dbReference type="SMR" id="Q02EW8"/>
<dbReference type="KEGG" id="pau:PA14_66710"/>
<dbReference type="PseudoCAP" id="PA14_66710"/>
<dbReference type="HOGENOM" id="CLU_114306_4_3_6"/>
<dbReference type="BioCyc" id="PAER208963:G1G74-5629-MONOMER"/>
<dbReference type="Proteomes" id="UP000000653">
    <property type="component" value="Chromosome"/>
</dbReference>
<dbReference type="GO" id="GO:1990904">
    <property type="term" value="C:ribonucleoprotein complex"/>
    <property type="evidence" value="ECO:0007669"/>
    <property type="project" value="UniProtKB-KW"/>
</dbReference>
<dbReference type="GO" id="GO:0005840">
    <property type="term" value="C:ribosome"/>
    <property type="evidence" value="ECO:0007669"/>
    <property type="project" value="UniProtKB-KW"/>
</dbReference>
<dbReference type="GO" id="GO:0046872">
    <property type="term" value="F:metal ion binding"/>
    <property type="evidence" value="ECO:0007669"/>
    <property type="project" value="UniProtKB-KW"/>
</dbReference>
<dbReference type="GO" id="GO:0019843">
    <property type="term" value="F:rRNA binding"/>
    <property type="evidence" value="ECO:0007669"/>
    <property type="project" value="UniProtKB-KW"/>
</dbReference>
<dbReference type="GO" id="GO:0003735">
    <property type="term" value="F:structural constituent of ribosome"/>
    <property type="evidence" value="ECO:0007669"/>
    <property type="project" value="InterPro"/>
</dbReference>
<dbReference type="GO" id="GO:0006412">
    <property type="term" value="P:translation"/>
    <property type="evidence" value="ECO:0007669"/>
    <property type="project" value="UniProtKB-UniRule"/>
</dbReference>
<dbReference type="Gene3D" id="4.10.830.30">
    <property type="entry name" value="Ribosomal protein L31"/>
    <property type="match status" value="1"/>
</dbReference>
<dbReference type="HAMAP" id="MF_00501">
    <property type="entry name" value="Ribosomal_bL31_1"/>
    <property type="match status" value="1"/>
</dbReference>
<dbReference type="InterPro" id="IPR034704">
    <property type="entry name" value="Ribosomal_bL28/bL31-like_sf"/>
</dbReference>
<dbReference type="InterPro" id="IPR002150">
    <property type="entry name" value="Ribosomal_bL31"/>
</dbReference>
<dbReference type="InterPro" id="IPR027491">
    <property type="entry name" value="Ribosomal_bL31_A"/>
</dbReference>
<dbReference type="InterPro" id="IPR042105">
    <property type="entry name" value="Ribosomal_bL31_sf"/>
</dbReference>
<dbReference type="NCBIfam" id="TIGR00105">
    <property type="entry name" value="L31"/>
    <property type="match status" value="1"/>
</dbReference>
<dbReference type="NCBIfam" id="NF000612">
    <property type="entry name" value="PRK00019.1"/>
    <property type="match status" value="1"/>
</dbReference>
<dbReference type="NCBIfam" id="NF001809">
    <property type="entry name" value="PRK00528.1"/>
    <property type="match status" value="1"/>
</dbReference>
<dbReference type="PANTHER" id="PTHR33280">
    <property type="entry name" value="50S RIBOSOMAL PROTEIN L31, CHLOROPLASTIC"/>
    <property type="match status" value="1"/>
</dbReference>
<dbReference type="PANTHER" id="PTHR33280:SF6">
    <property type="entry name" value="LARGE RIBOSOMAL SUBUNIT PROTEIN BL31A"/>
    <property type="match status" value="1"/>
</dbReference>
<dbReference type="Pfam" id="PF01197">
    <property type="entry name" value="Ribosomal_L31"/>
    <property type="match status" value="1"/>
</dbReference>
<dbReference type="PRINTS" id="PR01249">
    <property type="entry name" value="RIBOSOMALL31"/>
</dbReference>
<dbReference type="SUPFAM" id="SSF143800">
    <property type="entry name" value="L28p-like"/>
    <property type="match status" value="1"/>
</dbReference>
<dbReference type="PROSITE" id="PS01143">
    <property type="entry name" value="RIBOSOMAL_L31"/>
    <property type="match status" value="1"/>
</dbReference>
<comment type="function">
    <text evidence="1">Binds the 23S rRNA.</text>
</comment>
<comment type="cofactor">
    <cofactor evidence="1">
        <name>Zn(2+)</name>
        <dbReference type="ChEBI" id="CHEBI:29105"/>
    </cofactor>
    <text evidence="1">Binds 1 zinc ion per subunit.</text>
</comment>
<comment type="subunit">
    <text evidence="1">Part of the 50S ribosomal subunit.</text>
</comment>
<comment type="similarity">
    <text evidence="1">Belongs to the bacterial ribosomal protein bL31 family. Type A subfamily.</text>
</comment>
<keyword id="KW-0479">Metal-binding</keyword>
<keyword id="KW-0687">Ribonucleoprotein</keyword>
<keyword id="KW-0689">Ribosomal protein</keyword>
<keyword id="KW-0694">RNA-binding</keyword>
<keyword id="KW-0699">rRNA-binding</keyword>
<keyword id="KW-0862">Zinc</keyword>
<protein>
    <recommendedName>
        <fullName evidence="1">Large ribosomal subunit protein bL31</fullName>
    </recommendedName>
    <alternativeName>
        <fullName evidence="2">50S ribosomal protein L31</fullName>
    </alternativeName>
</protein>
<feature type="chain" id="PRO_1000126699" description="Large ribosomal subunit protein bL31">
    <location>
        <begin position="1"/>
        <end position="71"/>
    </location>
</feature>
<feature type="binding site" evidence="1">
    <location>
        <position position="16"/>
    </location>
    <ligand>
        <name>Zn(2+)</name>
        <dbReference type="ChEBI" id="CHEBI:29105"/>
    </ligand>
</feature>
<feature type="binding site" evidence="1">
    <location>
        <position position="18"/>
    </location>
    <ligand>
        <name>Zn(2+)</name>
        <dbReference type="ChEBI" id="CHEBI:29105"/>
    </ligand>
</feature>
<feature type="binding site" evidence="1">
    <location>
        <position position="37"/>
    </location>
    <ligand>
        <name>Zn(2+)</name>
        <dbReference type="ChEBI" id="CHEBI:29105"/>
    </ligand>
</feature>
<feature type="binding site" evidence="1">
    <location>
        <position position="40"/>
    </location>
    <ligand>
        <name>Zn(2+)</name>
        <dbReference type="ChEBI" id="CHEBI:29105"/>
    </ligand>
</feature>
<sequence>MKADIHPTYEAIEATCSCGNVIKTRSTLCKPIHLDVCSECHPFYTGKQKVLDTGGRIDRFKQRFGVFGATK</sequence>
<name>RL31_PSEAB</name>
<evidence type="ECO:0000255" key="1">
    <source>
        <dbReference type="HAMAP-Rule" id="MF_00501"/>
    </source>
</evidence>
<evidence type="ECO:0000305" key="2"/>
<gene>
    <name evidence="1" type="primary">rpmE</name>
    <name type="ordered locus">PA14_66710</name>
</gene>